<accession>Q6MVL6</accession>
<accession>Q7SCU5</accession>
<protein>
    <recommendedName>
        <fullName>Putative uncharacterized protein B8J22.070</fullName>
    </recommendedName>
</protein>
<proteinExistence type="predicted"/>
<sequence length="140" mass="15906">MMVDYRPASIMDFLFVDSKAKRHTTPGYSPVVTEPIADLAVTGLSRGERTGPDFIQVPMVAFGRGTQVQEKAFGLTLQQLKRNISEPTSLKLWIRDKNKVLVHYIYAPVYQSATNIQERWPGALAVRCYGHLYLHPQMLR</sequence>
<feature type="chain" id="PRO_0000260261" description="Putative uncharacterized protein B8J22.070">
    <location>
        <begin position="1"/>
        <end position="140"/>
    </location>
</feature>
<keyword id="KW-1185">Reference proteome</keyword>
<organism>
    <name type="scientific">Neurospora crassa (strain ATCC 24698 / 74-OR23-1A / CBS 708.71 / DSM 1257 / FGSC 987)</name>
    <dbReference type="NCBI Taxonomy" id="367110"/>
    <lineage>
        <taxon>Eukaryota</taxon>
        <taxon>Fungi</taxon>
        <taxon>Dikarya</taxon>
        <taxon>Ascomycota</taxon>
        <taxon>Pezizomycotina</taxon>
        <taxon>Sordariomycetes</taxon>
        <taxon>Sordariomycetidae</taxon>
        <taxon>Sordariales</taxon>
        <taxon>Sordariaceae</taxon>
        <taxon>Neurospora</taxon>
    </lineage>
</organism>
<gene>
    <name type="ORF">B8J22.070</name>
    <name type="ORF">NCU10996</name>
</gene>
<reference key="1">
    <citation type="journal article" date="2003" name="Nucleic Acids Res.">
        <title>What's in the genome of a filamentous fungus? Analysis of the Neurospora genome sequence.</title>
        <authorList>
            <person name="Mannhaupt G."/>
            <person name="Montrone C."/>
            <person name="Haase D."/>
            <person name="Mewes H.-W."/>
            <person name="Aign V."/>
            <person name="Hoheisel J.D."/>
            <person name="Fartmann B."/>
            <person name="Nyakatura G."/>
            <person name="Kempken F."/>
            <person name="Maier J."/>
            <person name="Schulte U."/>
        </authorList>
    </citation>
    <scope>NUCLEOTIDE SEQUENCE [LARGE SCALE GENOMIC DNA]</scope>
    <source>
        <strain>ATCC 24698 / 74-OR23-1A / CBS 708.71 / DSM 1257 / FGSC 987</strain>
    </source>
</reference>
<reference key="2">
    <citation type="journal article" date="2003" name="Nature">
        <title>The genome sequence of the filamentous fungus Neurospora crassa.</title>
        <authorList>
            <person name="Galagan J.E."/>
            <person name="Calvo S.E."/>
            <person name="Borkovich K.A."/>
            <person name="Selker E.U."/>
            <person name="Read N.D."/>
            <person name="Jaffe D.B."/>
            <person name="FitzHugh W."/>
            <person name="Ma L.-J."/>
            <person name="Smirnov S."/>
            <person name="Purcell S."/>
            <person name="Rehman B."/>
            <person name="Elkins T."/>
            <person name="Engels R."/>
            <person name="Wang S."/>
            <person name="Nielsen C.B."/>
            <person name="Butler J."/>
            <person name="Endrizzi M."/>
            <person name="Qui D."/>
            <person name="Ianakiev P."/>
            <person name="Bell-Pedersen D."/>
            <person name="Nelson M.A."/>
            <person name="Werner-Washburne M."/>
            <person name="Selitrennikoff C.P."/>
            <person name="Kinsey J.A."/>
            <person name="Braun E.L."/>
            <person name="Zelter A."/>
            <person name="Schulte U."/>
            <person name="Kothe G.O."/>
            <person name="Jedd G."/>
            <person name="Mewes H.-W."/>
            <person name="Staben C."/>
            <person name="Marcotte E."/>
            <person name="Greenberg D."/>
            <person name="Roy A."/>
            <person name="Foley K."/>
            <person name="Naylor J."/>
            <person name="Stange-Thomann N."/>
            <person name="Barrett R."/>
            <person name="Gnerre S."/>
            <person name="Kamal M."/>
            <person name="Kamvysselis M."/>
            <person name="Mauceli E.W."/>
            <person name="Bielke C."/>
            <person name="Rudd S."/>
            <person name="Frishman D."/>
            <person name="Krystofova S."/>
            <person name="Rasmussen C."/>
            <person name="Metzenberg R.L."/>
            <person name="Perkins D.D."/>
            <person name="Kroken S."/>
            <person name="Cogoni C."/>
            <person name="Macino G."/>
            <person name="Catcheside D.E.A."/>
            <person name="Li W."/>
            <person name="Pratt R.J."/>
            <person name="Osmani S.A."/>
            <person name="DeSouza C.P.C."/>
            <person name="Glass N.L."/>
            <person name="Orbach M.J."/>
            <person name="Berglund J.A."/>
            <person name="Voelker R."/>
            <person name="Yarden O."/>
            <person name="Plamann M."/>
            <person name="Seiler S."/>
            <person name="Dunlap J.C."/>
            <person name="Radford A."/>
            <person name="Aramayo R."/>
            <person name="Natvig D.O."/>
            <person name="Alex L.A."/>
            <person name="Mannhaupt G."/>
            <person name="Ebbole D.J."/>
            <person name="Freitag M."/>
            <person name="Paulsen I."/>
            <person name="Sachs M.S."/>
            <person name="Lander E.S."/>
            <person name="Nusbaum C."/>
            <person name="Birren B.W."/>
        </authorList>
    </citation>
    <scope>NUCLEOTIDE SEQUENCE [LARGE SCALE GENOMIC DNA]</scope>
    <source>
        <strain>ATCC 24698 / 74-OR23-1A / CBS 708.71 / DSM 1257 / FGSC 987</strain>
    </source>
</reference>
<name>YB270_NEUCR</name>
<dbReference type="EMBL" id="BX842627">
    <property type="protein sequence ID" value="CAE76282.1"/>
    <property type="molecule type" value="Genomic_DNA"/>
</dbReference>
<dbReference type="EMBL" id="CM002236">
    <property type="status" value="NOT_ANNOTATED_CDS"/>
    <property type="molecule type" value="Genomic_DNA"/>
</dbReference>
<dbReference type="InParanoid" id="Q6MVL6"/>
<dbReference type="Proteomes" id="UP000001805">
    <property type="component" value="Chromosome 1, Linkage Group I"/>
</dbReference>